<reference key="1">
    <citation type="journal article" date="1989" name="Nucleic Acids Res.">
        <title>Nucleotide sequence of the rye chloroplast DNA fragment, comprising psbE and psbF genes.</title>
        <authorList>
            <person name="Zolotarev A.S."/>
            <person name="Kolosov V.L."/>
        </authorList>
    </citation>
    <scope>NUCLEOTIDE SEQUENCE [GENOMIC DNA]</scope>
</reference>
<reference key="2">
    <citation type="journal article" date="1989" name="Bioorg. Khim.">
        <title>Photosystem II of rye. Nucleotide sequence of genes psbE, psbF, psbL and OPC40 of chloroplast DNA.</title>
        <authorList>
            <person name="Kolosov V.L."/>
            <person name="Klezovich O.N."/>
            <person name="Abdulaev N.G."/>
            <person name="Zolosharev A.S."/>
        </authorList>
    </citation>
    <scope>NUCLEOTIDE SEQUENCE [GENOMIC DNA]</scope>
</reference>
<comment type="function">
    <text evidence="1">This b-type cytochrome is tightly associated with the reaction center of photosystem II (PSII). PSII is a light-driven water:plastoquinone oxidoreductase that uses light energy to abstract electrons from H(2)O, generating O(2) and a proton gradient subsequently used for ATP formation. It consists of a core antenna complex that captures photons, and an electron transfer chain that converts photonic excitation into a charge separation.</text>
</comment>
<comment type="cofactor">
    <cofactor evidence="1">
        <name>heme b</name>
        <dbReference type="ChEBI" id="CHEBI:60344"/>
    </cofactor>
    <text evidence="1">With its partner (PsbE) binds heme. PSII binds additional chlorophylls, carotenoids and specific lipids.</text>
</comment>
<comment type="subunit">
    <text evidence="1">Heterodimer of an alpha subunit and a beta subunit. PSII is composed of 1 copy each of membrane proteins PsbA, PsbB, PsbC, PsbD, PsbE, PsbF, PsbH, PsbI, PsbJ, PsbK, PsbL, PsbM, PsbT, PsbX, PsbY, PsbZ, Psb30/Ycf12, at least 3 peripheral proteins of the oxygen-evolving complex and a large number of cofactors. It forms dimeric complexes.</text>
</comment>
<comment type="subcellular location">
    <subcellularLocation>
        <location evidence="1">Plastid</location>
        <location evidence="1">Chloroplast thylakoid membrane</location>
        <topology evidence="1">Single-pass membrane protein</topology>
    </subcellularLocation>
</comment>
<comment type="similarity">
    <text evidence="1">Belongs to the PsbE/PsbF family.</text>
</comment>
<sequence length="39" mass="4498">MTIDRTYPIFTVRWLAIHGLAVPTVFFLGSISAMQFIQR</sequence>
<evidence type="ECO:0000255" key="1">
    <source>
        <dbReference type="HAMAP-Rule" id="MF_00643"/>
    </source>
</evidence>
<name>PSBF_SECCE</name>
<protein>
    <recommendedName>
        <fullName evidence="1">Cytochrome b559 subunit beta</fullName>
    </recommendedName>
    <alternativeName>
        <fullName evidence="1">PSII reaction center subunit VI</fullName>
    </alternativeName>
</protein>
<keyword id="KW-0150">Chloroplast</keyword>
<keyword id="KW-0249">Electron transport</keyword>
<keyword id="KW-0349">Heme</keyword>
<keyword id="KW-0408">Iron</keyword>
<keyword id="KW-0472">Membrane</keyword>
<keyword id="KW-0479">Metal-binding</keyword>
<keyword id="KW-0602">Photosynthesis</keyword>
<keyword id="KW-0604">Photosystem II</keyword>
<keyword id="KW-0934">Plastid</keyword>
<keyword id="KW-0793">Thylakoid</keyword>
<keyword id="KW-0812">Transmembrane</keyword>
<keyword id="KW-1133">Transmembrane helix</keyword>
<keyword id="KW-0813">Transport</keyword>
<organism>
    <name type="scientific">Secale cereale</name>
    <name type="common">Rye</name>
    <dbReference type="NCBI Taxonomy" id="4550"/>
    <lineage>
        <taxon>Eukaryota</taxon>
        <taxon>Viridiplantae</taxon>
        <taxon>Streptophyta</taxon>
        <taxon>Embryophyta</taxon>
        <taxon>Tracheophyta</taxon>
        <taxon>Spermatophyta</taxon>
        <taxon>Magnoliopsida</taxon>
        <taxon>Liliopsida</taxon>
        <taxon>Poales</taxon>
        <taxon>Poaceae</taxon>
        <taxon>BOP clade</taxon>
        <taxon>Pooideae</taxon>
        <taxon>Triticodae</taxon>
        <taxon>Triticeae</taxon>
        <taxon>Hordeinae</taxon>
        <taxon>Secale</taxon>
    </lineage>
</organism>
<dbReference type="EMBL" id="X13326">
    <property type="protein sequence ID" value="CAA31699.1"/>
    <property type="molecule type" value="Genomic_DNA"/>
</dbReference>
<dbReference type="PIR" id="S03192">
    <property type="entry name" value="S03192"/>
</dbReference>
<dbReference type="RefSeq" id="YP_008239187.1">
    <property type="nucleotide sequence ID" value="NC_021761.1"/>
</dbReference>
<dbReference type="SMR" id="P60127"/>
<dbReference type="GeneID" id="16792657"/>
<dbReference type="GO" id="GO:0009535">
    <property type="term" value="C:chloroplast thylakoid membrane"/>
    <property type="evidence" value="ECO:0007669"/>
    <property type="project" value="UniProtKB-SubCell"/>
</dbReference>
<dbReference type="GO" id="GO:0009539">
    <property type="term" value="C:photosystem II reaction center"/>
    <property type="evidence" value="ECO:0007669"/>
    <property type="project" value="InterPro"/>
</dbReference>
<dbReference type="GO" id="GO:0009055">
    <property type="term" value="F:electron transfer activity"/>
    <property type="evidence" value="ECO:0007669"/>
    <property type="project" value="UniProtKB-UniRule"/>
</dbReference>
<dbReference type="GO" id="GO:0020037">
    <property type="term" value="F:heme binding"/>
    <property type="evidence" value="ECO:0007669"/>
    <property type="project" value="InterPro"/>
</dbReference>
<dbReference type="GO" id="GO:0005506">
    <property type="term" value="F:iron ion binding"/>
    <property type="evidence" value="ECO:0007669"/>
    <property type="project" value="UniProtKB-UniRule"/>
</dbReference>
<dbReference type="GO" id="GO:0009767">
    <property type="term" value="P:photosynthetic electron transport chain"/>
    <property type="evidence" value="ECO:0007669"/>
    <property type="project" value="InterPro"/>
</dbReference>
<dbReference type="HAMAP" id="MF_00643">
    <property type="entry name" value="PSII_PsbF"/>
    <property type="match status" value="1"/>
</dbReference>
<dbReference type="InterPro" id="IPR006241">
    <property type="entry name" value="PSII_cyt_b559_bsu"/>
</dbReference>
<dbReference type="InterPro" id="IPR006216">
    <property type="entry name" value="PSII_cyt_b559_CS"/>
</dbReference>
<dbReference type="InterPro" id="IPR013081">
    <property type="entry name" value="PSII_cyt_b559_N"/>
</dbReference>
<dbReference type="NCBIfam" id="TIGR01333">
    <property type="entry name" value="cyt_b559_beta"/>
    <property type="match status" value="1"/>
</dbReference>
<dbReference type="Pfam" id="PF00283">
    <property type="entry name" value="Cytochrom_B559"/>
    <property type="match status" value="1"/>
</dbReference>
<dbReference type="PIRSF" id="PIRSF000037">
    <property type="entry name" value="PsbF"/>
    <property type="match status" value="1"/>
</dbReference>
<dbReference type="SUPFAM" id="SSF161045">
    <property type="entry name" value="Cytochrome b559 subunits"/>
    <property type="match status" value="1"/>
</dbReference>
<dbReference type="PROSITE" id="PS00537">
    <property type="entry name" value="CYTOCHROME_B559"/>
    <property type="match status" value="1"/>
</dbReference>
<gene>
    <name evidence="1" type="primary">psbF</name>
</gene>
<geneLocation type="chloroplast"/>
<proteinExistence type="inferred from homology"/>
<accession>P60127</accession>
<accession>P05171</accession>
<accession>P09198</accession>
<accession>Q95H58</accession>
<accession>Q9M3L1</accession>
<feature type="chain" id="PRO_0000200452" description="Cytochrome b559 subunit beta">
    <location>
        <begin position="1"/>
        <end position="39"/>
    </location>
</feature>
<feature type="transmembrane region" description="Helical" evidence="1">
    <location>
        <begin position="14"/>
        <end position="30"/>
    </location>
</feature>
<feature type="binding site" description="axial binding residue" evidence="1">
    <location>
        <position position="18"/>
    </location>
    <ligand>
        <name>heme</name>
        <dbReference type="ChEBI" id="CHEBI:30413"/>
        <note>ligand shared with alpha subunit</note>
    </ligand>
    <ligandPart>
        <name>Fe</name>
        <dbReference type="ChEBI" id="CHEBI:18248"/>
    </ligandPart>
</feature>